<protein>
    <recommendedName>
        <fullName evidence="1">Small ribosomal subunit protein bS16</fullName>
    </recommendedName>
    <alternativeName>
        <fullName evidence="3">30S ribosomal protein S16</fullName>
    </alternativeName>
</protein>
<comment type="similarity">
    <text evidence="1">Belongs to the bacterial ribosomal protein bS16 family.</text>
</comment>
<reference key="1">
    <citation type="submission" date="2005-03" db="EMBL/GenBank/DDBJ databases">
        <title>Comparison of the complete genome sequences of Rhodococcus erythropolis PR4 and Rhodococcus opacus B4.</title>
        <authorList>
            <person name="Takarada H."/>
            <person name="Sekine M."/>
            <person name="Hosoyama A."/>
            <person name="Yamada R."/>
            <person name="Fujisawa T."/>
            <person name="Omata S."/>
            <person name="Shimizu A."/>
            <person name="Tsukatani N."/>
            <person name="Tanikawa S."/>
            <person name="Fujita N."/>
            <person name="Harayama S."/>
        </authorList>
    </citation>
    <scope>NUCLEOTIDE SEQUENCE [LARGE SCALE GENOMIC DNA]</scope>
    <source>
        <strain>PR4 / NBRC 100887</strain>
    </source>
</reference>
<accession>C0ZXR7</accession>
<gene>
    <name evidence="1" type="primary">rpsP</name>
    <name type="ordered locus">RER_24440</name>
</gene>
<proteinExistence type="inferred from homology"/>
<sequence length="156" mass="17006">MAVKIKLTRLGKIRNAQYRVVIADSRTRRDGRAIETIGKYHPKEEPSLIDIDSERAQYWLSVGAQPTEPVEALLKITGDWQKFKGLPGTEGTLRVKEAKPTKLELFQAALAQAENEPVAEAITPKKKKAAKADEAKAEDTAADAEAPAADAEAADK</sequence>
<keyword id="KW-0687">Ribonucleoprotein</keyword>
<keyword id="KW-0689">Ribosomal protein</keyword>
<dbReference type="EMBL" id="AP008957">
    <property type="protein sequence ID" value="BAH33152.1"/>
    <property type="molecule type" value="Genomic_DNA"/>
</dbReference>
<dbReference type="RefSeq" id="WP_003942818.1">
    <property type="nucleotide sequence ID" value="NC_012490.1"/>
</dbReference>
<dbReference type="SMR" id="C0ZXR7"/>
<dbReference type="GeneID" id="64140361"/>
<dbReference type="KEGG" id="rer:RER_24440"/>
<dbReference type="eggNOG" id="COG0228">
    <property type="taxonomic scope" value="Bacteria"/>
</dbReference>
<dbReference type="HOGENOM" id="CLU_100590_1_1_11"/>
<dbReference type="Proteomes" id="UP000002204">
    <property type="component" value="Chromosome"/>
</dbReference>
<dbReference type="GO" id="GO:0005737">
    <property type="term" value="C:cytoplasm"/>
    <property type="evidence" value="ECO:0007669"/>
    <property type="project" value="UniProtKB-ARBA"/>
</dbReference>
<dbReference type="GO" id="GO:0015935">
    <property type="term" value="C:small ribosomal subunit"/>
    <property type="evidence" value="ECO:0007669"/>
    <property type="project" value="TreeGrafter"/>
</dbReference>
<dbReference type="GO" id="GO:0003735">
    <property type="term" value="F:structural constituent of ribosome"/>
    <property type="evidence" value="ECO:0007669"/>
    <property type="project" value="InterPro"/>
</dbReference>
<dbReference type="GO" id="GO:0006412">
    <property type="term" value="P:translation"/>
    <property type="evidence" value="ECO:0007669"/>
    <property type="project" value="UniProtKB-UniRule"/>
</dbReference>
<dbReference type="Gene3D" id="3.30.1320.10">
    <property type="match status" value="1"/>
</dbReference>
<dbReference type="HAMAP" id="MF_00385">
    <property type="entry name" value="Ribosomal_bS16"/>
    <property type="match status" value="1"/>
</dbReference>
<dbReference type="InterPro" id="IPR000307">
    <property type="entry name" value="Ribosomal_bS16"/>
</dbReference>
<dbReference type="InterPro" id="IPR020592">
    <property type="entry name" value="Ribosomal_bS16_CS"/>
</dbReference>
<dbReference type="InterPro" id="IPR023803">
    <property type="entry name" value="Ribosomal_bS16_dom_sf"/>
</dbReference>
<dbReference type="NCBIfam" id="NF011093">
    <property type="entry name" value="PRK14520.1"/>
    <property type="match status" value="1"/>
</dbReference>
<dbReference type="NCBIfam" id="TIGR00002">
    <property type="entry name" value="S16"/>
    <property type="match status" value="1"/>
</dbReference>
<dbReference type="PANTHER" id="PTHR12919">
    <property type="entry name" value="30S RIBOSOMAL PROTEIN S16"/>
    <property type="match status" value="1"/>
</dbReference>
<dbReference type="PANTHER" id="PTHR12919:SF20">
    <property type="entry name" value="SMALL RIBOSOMAL SUBUNIT PROTEIN BS16M"/>
    <property type="match status" value="1"/>
</dbReference>
<dbReference type="Pfam" id="PF00886">
    <property type="entry name" value="Ribosomal_S16"/>
    <property type="match status" value="1"/>
</dbReference>
<dbReference type="SUPFAM" id="SSF54565">
    <property type="entry name" value="Ribosomal protein S16"/>
    <property type="match status" value="1"/>
</dbReference>
<dbReference type="PROSITE" id="PS00732">
    <property type="entry name" value="RIBOSOMAL_S16"/>
    <property type="match status" value="1"/>
</dbReference>
<evidence type="ECO:0000255" key="1">
    <source>
        <dbReference type="HAMAP-Rule" id="MF_00385"/>
    </source>
</evidence>
<evidence type="ECO:0000256" key="2">
    <source>
        <dbReference type="SAM" id="MobiDB-lite"/>
    </source>
</evidence>
<evidence type="ECO:0000305" key="3"/>
<feature type="chain" id="PRO_1000205770" description="Small ribosomal subunit protein bS16">
    <location>
        <begin position="1"/>
        <end position="156"/>
    </location>
</feature>
<feature type="region of interest" description="Disordered" evidence="2">
    <location>
        <begin position="114"/>
        <end position="156"/>
    </location>
</feature>
<feature type="compositionally biased region" description="Basic and acidic residues" evidence="2">
    <location>
        <begin position="130"/>
        <end position="139"/>
    </location>
</feature>
<feature type="compositionally biased region" description="Low complexity" evidence="2">
    <location>
        <begin position="143"/>
        <end position="156"/>
    </location>
</feature>
<name>RS16_RHOE4</name>
<organism>
    <name type="scientific">Rhodococcus erythropolis (strain PR4 / NBRC 100887)</name>
    <dbReference type="NCBI Taxonomy" id="234621"/>
    <lineage>
        <taxon>Bacteria</taxon>
        <taxon>Bacillati</taxon>
        <taxon>Actinomycetota</taxon>
        <taxon>Actinomycetes</taxon>
        <taxon>Mycobacteriales</taxon>
        <taxon>Nocardiaceae</taxon>
        <taxon>Rhodococcus</taxon>
        <taxon>Rhodococcus erythropolis group</taxon>
    </lineage>
</organism>